<organism>
    <name type="scientific">Sus scrofa</name>
    <name type="common">Pig</name>
    <dbReference type="NCBI Taxonomy" id="9823"/>
    <lineage>
        <taxon>Eukaryota</taxon>
        <taxon>Metazoa</taxon>
        <taxon>Chordata</taxon>
        <taxon>Craniata</taxon>
        <taxon>Vertebrata</taxon>
        <taxon>Euteleostomi</taxon>
        <taxon>Mammalia</taxon>
        <taxon>Eutheria</taxon>
        <taxon>Laurasiatheria</taxon>
        <taxon>Artiodactyla</taxon>
        <taxon>Suina</taxon>
        <taxon>Suidae</taxon>
        <taxon>Sus</taxon>
    </lineage>
</organism>
<proteinExistence type="evidence at transcript level"/>
<feature type="transit peptide" description="Mitochondrion" evidence="6">
    <location>
        <begin position="1"/>
        <end position="37"/>
    </location>
</feature>
<feature type="chain" id="PRO_0000013485" description="Hydroxymethylglutaryl-CoA synthase, mitochondrial">
    <location>
        <begin position="38"/>
        <end position="508"/>
    </location>
</feature>
<feature type="active site" description="Proton donor/acceptor" evidence="5">
    <location>
        <position position="132"/>
    </location>
</feature>
<feature type="active site" description="Acyl-thioester intermediate" evidence="5">
    <location>
        <position position="166"/>
    </location>
</feature>
<feature type="active site" description="Proton donor/acceptor" evidence="5">
    <location>
        <position position="301"/>
    </location>
</feature>
<feature type="binding site" evidence="2">
    <location>
        <position position="80"/>
    </location>
    <ligand>
        <name>(3S)-3-hydroxy-3-methylglutaryl-CoA</name>
        <dbReference type="ChEBI" id="CHEBI:43074"/>
    </ligand>
</feature>
<feature type="binding site" evidence="2">
    <location>
        <position position="81"/>
    </location>
    <ligand>
        <name>(3S)-3-hydroxy-3-methylglutaryl-CoA</name>
        <dbReference type="ChEBI" id="CHEBI:43074"/>
    </ligand>
</feature>
<feature type="binding site" evidence="2">
    <location>
        <position position="166"/>
    </location>
    <ligand>
        <name>(3S)-3-hydroxy-3-methylglutaryl-CoA</name>
        <dbReference type="ChEBI" id="CHEBI:43074"/>
    </ligand>
</feature>
<feature type="binding site" evidence="2">
    <location>
        <position position="204"/>
    </location>
    <ligand>
        <name>(3S)-3-hydroxy-3-methylglutaryl-CoA</name>
        <dbReference type="ChEBI" id="CHEBI:43074"/>
    </ligand>
</feature>
<feature type="binding site" evidence="2">
    <location>
        <position position="208"/>
    </location>
    <ligand>
        <name>(3S)-3-hydroxy-3-methylglutaryl-CoA</name>
        <dbReference type="ChEBI" id="CHEBI:43074"/>
    </ligand>
</feature>
<feature type="binding site" evidence="2">
    <location>
        <position position="258"/>
    </location>
    <ligand>
        <name>(3S)-3-hydroxy-3-methylglutaryl-CoA</name>
        <dbReference type="ChEBI" id="CHEBI:43074"/>
    </ligand>
</feature>
<feature type="binding site" evidence="2">
    <location>
        <position position="301"/>
    </location>
    <ligand>
        <name>(3S)-3-hydroxy-3-methylglutaryl-CoA</name>
        <dbReference type="ChEBI" id="CHEBI:43074"/>
    </ligand>
</feature>
<feature type="binding site" evidence="2">
    <location>
        <position position="310"/>
    </location>
    <ligand>
        <name>(3S)-3-hydroxy-3-methylglutaryl-CoA</name>
        <dbReference type="ChEBI" id="CHEBI:43074"/>
    </ligand>
</feature>
<feature type="binding site" evidence="2">
    <location>
        <position position="380"/>
    </location>
    <ligand>
        <name>(3S)-3-hydroxy-3-methylglutaryl-CoA</name>
        <dbReference type="ChEBI" id="CHEBI:43074"/>
    </ligand>
</feature>
<feature type="binding site" evidence="2">
    <location>
        <position position="414"/>
    </location>
    <ligand>
        <name>(3S)-3-hydroxy-3-methylglutaryl-CoA</name>
        <dbReference type="ChEBI" id="CHEBI:43074"/>
    </ligand>
</feature>
<feature type="modified residue" description="N6-succinyllysine" evidence="3">
    <location>
        <position position="52"/>
    </location>
</feature>
<feature type="modified residue" description="N6-acetyllysine" evidence="3">
    <location>
        <position position="243"/>
    </location>
</feature>
<feature type="modified residue" description="N6-acetyllysine; alternate" evidence="3">
    <location>
        <position position="256"/>
    </location>
</feature>
<feature type="modified residue" description="N6-succinyllysine; alternate" evidence="3">
    <location>
        <position position="256"/>
    </location>
</feature>
<feature type="modified residue" description="N6-acetyllysine" evidence="3">
    <location>
        <position position="306"/>
    </location>
</feature>
<feature type="modified residue" description="N6-acetyllysine; alternate" evidence="3">
    <location>
        <position position="310"/>
    </location>
</feature>
<feature type="modified residue" description="N6-succinyllysine; alternate" evidence="4">
    <location>
        <position position="310"/>
    </location>
</feature>
<feature type="modified residue" description="N6-succinyllysine" evidence="3">
    <location>
        <position position="333"/>
    </location>
</feature>
<feature type="modified residue" description="N6-acetyllysine; alternate" evidence="3">
    <location>
        <position position="342"/>
    </location>
</feature>
<feature type="modified residue" description="N6-succinyllysine; alternate" evidence="3">
    <location>
        <position position="342"/>
    </location>
</feature>
<feature type="modified residue" description="N6-acetyllysine; alternate" evidence="3">
    <location>
        <position position="350"/>
    </location>
</feature>
<feature type="modified residue" description="N6-succinyllysine; alternate" evidence="3">
    <location>
        <position position="350"/>
    </location>
</feature>
<feature type="modified residue" description="N6-acetyllysine; alternate" evidence="3">
    <location>
        <position position="354"/>
    </location>
</feature>
<feature type="modified residue" description="N6-succinyllysine; alternate" evidence="3">
    <location>
        <position position="354"/>
    </location>
</feature>
<feature type="modified residue" description="N6-acetyllysine; alternate" evidence="3">
    <location>
        <position position="358"/>
    </location>
</feature>
<feature type="modified residue" description="N6-succinyllysine; alternate" evidence="3">
    <location>
        <position position="358"/>
    </location>
</feature>
<feature type="modified residue" description="Phosphoserine" evidence="2">
    <location>
        <position position="433"/>
    </location>
</feature>
<feature type="modified residue" description="N6-acetyllysine" evidence="3">
    <location>
        <position position="437"/>
    </location>
</feature>
<feature type="modified residue" description="Phosphoserine" evidence="2">
    <location>
        <position position="440"/>
    </location>
</feature>
<feature type="modified residue" description="Phosphoserine" evidence="3">
    <location>
        <position position="456"/>
    </location>
</feature>
<feature type="modified residue" description="N6-acetyllysine; alternate" evidence="3">
    <location>
        <position position="473"/>
    </location>
</feature>
<feature type="modified residue" description="N6-succinyllysine; alternate" evidence="3">
    <location>
        <position position="473"/>
    </location>
</feature>
<reference key="1">
    <citation type="journal article" date="1997" name="Biochem. J.">
        <title>Gene expression of mitochondrial 3-hydroxy-3-methylglutaryl-CoA synthase in a poorly ketogenic mammal: effect of starvation during the neonatal period of the piglet.</title>
        <authorList>
            <person name="Adams S.H."/>
            <person name="Alho C.S."/>
            <person name="Asins G."/>
            <person name="Hegardt F.G."/>
            <person name="Marrero P.F."/>
        </authorList>
    </citation>
    <scope>NUCLEOTIDE SEQUENCE [MRNA]</scope>
    <source>
        <tissue>Liver</tissue>
    </source>
</reference>
<reference key="2">
    <citation type="submission" date="2007-05" db="EMBL/GenBank/DDBJ databases">
        <authorList>
            <consortium name="Porcine genome sequencing project"/>
        </authorList>
    </citation>
    <scope>NUCLEOTIDE SEQUENCE [LARGE SCALE GENOMIC DNA]</scope>
</reference>
<dbReference type="EC" id="2.3.3.10" evidence="2"/>
<dbReference type="EMBL" id="U90884">
    <property type="protein sequence ID" value="AAC48727.1"/>
    <property type="molecule type" value="mRNA"/>
</dbReference>
<dbReference type="EMBL" id="CR956647">
    <property type="protein sequence ID" value="CAN13229.1"/>
    <property type="molecule type" value="Genomic_DNA"/>
</dbReference>
<dbReference type="RefSeq" id="NP_999545.1">
    <property type="nucleotide sequence ID" value="NM_214380.2"/>
</dbReference>
<dbReference type="SMR" id="O02734"/>
<dbReference type="FunCoup" id="O02734">
    <property type="interactions" value="850"/>
</dbReference>
<dbReference type="STRING" id="9823.ENSSSCP00000034427"/>
<dbReference type="PaxDb" id="9823-ENSSSCP00000007162"/>
<dbReference type="PeptideAtlas" id="O02734"/>
<dbReference type="Ensembl" id="ENSSSCT00000064945.3">
    <property type="protein sequence ID" value="ENSSSCP00000042638.2"/>
    <property type="gene ID" value="ENSSSCG00000036808.3"/>
</dbReference>
<dbReference type="Ensembl" id="ENSSSCT00015043748.1">
    <property type="protein sequence ID" value="ENSSSCP00015017272.1"/>
    <property type="gene ID" value="ENSSSCG00015032911.1"/>
</dbReference>
<dbReference type="Ensembl" id="ENSSSCT00015043925.1">
    <property type="protein sequence ID" value="ENSSSCP00015017363.1"/>
    <property type="gene ID" value="ENSSSCG00015032911.1"/>
</dbReference>
<dbReference type="Ensembl" id="ENSSSCT00070005881.1">
    <property type="protein sequence ID" value="ENSSSCP00070004797.1"/>
    <property type="gene ID" value="ENSSSCG00070003102.1"/>
</dbReference>
<dbReference type="Ensembl" id="ENSSSCT00090027620">
    <property type="protein sequence ID" value="ENSSSCP00090017039"/>
    <property type="gene ID" value="ENSSSCG00090015698"/>
</dbReference>
<dbReference type="Ensembl" id="ENSSSCT00105021024">
    <property type="protein sequence ID" value="ENSSSCP00105015171"/>
    <property type="gene ID" value="ENSSSCG00105010502"/>
</dbReference>
<dbReference type="Ensembl" id="ENSSSCT00110040919">
    <property type="protein sequence ID" value="ENSSSCP00110028607"/>
    <property type="gene ID" value="ENSSSCG00110021176"/>
</dbReference>
<dbReference type="Ensembl" id="ENSSSCT00130061180">
    <property type="protein sequence ID" value="ENSSSCP00130043846"/>
    <property type="gene ID" value="ENSSSCG00130031333"/>
</dbReference>
<dbReference type="GeneID" id="397673"/>
<dbReference type="KEGG" id="ssc:397673"/>
<dbReference type="CTD" id="3158"/>
<dbReference type="VGNC" id="VGNC:109632">
    <property type="gene designation" value="HMGCS2"/>
</dbReference>
<dbReference type="eggNOG" id="KOG1393">
    <property type="taxonomic scope" value="Eukaryota"/>
</dbReference>
<dbReference type="GeneTree" id="ENSGT00390000006096"/>
<dbReference type="HOGENOM" id="CLU_008065_0_1_1"/>
<dbReference type="InParanoid" id="O02734"/>
<dbReference type="OrthoDB" id="1269963at2759"/>
<dbReference type="TreeFam" id="TF105361"/>
<dbReference type="BRENDA" id="2.3.3.10">
    <property type="organism ID" value="6170"/>
</dbReference>
<dbReference type="Reactome" id="R-SSC-77111">
    <property type="pathway name" value="Synthesis of Ketone Bodies"/>
</dbReference>
<dbReference type="Reactome" id="R-SSC-9837999">
    <property type="pathway name" value="Mitochondrial protein degradation"/>
</dbReference>
<dbReference type="UniPathway" id="UPA00058">
    <property type="reaction ID" value="UER00102"/>
</dbReference>
<dbReference type="Proteomes" id="UP000008227">
    <property type="component" value="Chromosome 4"/>
</dbReference>
<dbReference type="Proteomes" id="UP000314985">
    <property type="component" value="Chromosome 4"/>
</dbReference>
<dbReference type="Proteomes" id="UP000694570">
    <property type="component" value="Unplaced"/>
</dbReference>
<dbReference type="Proteomes" id="UP000694571">
    <property type="component" value="Unplaced"/>
</dbReference>
<dbReference type="Proteomes" id="UP000694720">
    <property type="component" value="Unplaced"/>
</dbReference>
<dbReference type="Proteomes" id="UP000694722">
    <property type="component" value="Unplaced"/>
</dbReference>
<dbReference type="Proteomes" id="UP000694723">
    <property type="component" value="Unplaced"/>
</dbReference>
<dbReference type="Proteomes" id="UP000694724">
    <property type="component" value="Unplaced"/>
</dbReference>
<dbReference type="Proteomes" id="UP000694725">
    <property type="component" value="Unplaced"/>
</dbReference>
<dbReference type="Proteomes" id="UP000694726">
    <property type="component" value="Unplaced"/>
</dbReference>
<dbReference type="Proteomes" id="UP000694727">
    <property type="component" value="Unplaced"/>
</dbReference>
<dbReference type="Proteomes" id="UP000694728">
    <property type="component" value="Unplaced"/>
</dbReference>
<dbReference type="Bgee" id="ENSSSCG00000036808">
    <property type="expression patterns" value="Expressed in right lobe of liver and 10 other cell types or tissues"/>
</dbReference>
<dbReference type="ExpressionAtlas" id="O02734">
    <property type="expression patterns" value="baseline and differential"/>
</dbReference>
<dbReference type="GO" id="GO:0005739">
    <property type="term" value="C:mitochondrion"/>
    <property type="evidence" value="ECO:0000318"/>
    <property type="project" value="GO_Central"/>
</dbReference>
<dbReference type="GO" id="GO:0004421">
    <property type="term" value="F:hydroxymethylglutaryl-CoA synthase activity"/>
    <property type="evidence" value="ECO:0000250"/>
    <property type="project" value="UniProtKB"/>
</dbReference>
<dbReference type="GO" id="GO:0042802">
    <property type="term" value="F:identical protein binding"/>
    <property type="evidence" value="ECO:0000250"/>
    <property type="project" value="UniProtKB"/>
</dbReference>
<dbReference type="GO" id="GO:0006084">
    <property type="term" value="P:acetyl-CoA metabolic process"/>
    <property type="evidence" value="ECO:0000318"/>
    <property type="project" value="GO_Central"/>
</dbReference>
<dbReference type="GO" id="GO:0006695">
    <property type="term" value="P:cholesterol biosynthetic process"/>
    <property type="evidence" value="ECO:0007669"/>
    <property type="project" value="UniProtKB-KW"/>
</dbReference>
<dbReference type="GO" id="GO:0010142">
    <property type="term" value="P:farnesyl diphosphate biosynthetic process, mevalonate pathway"/>
    <property type="evidence" value="ECO:0000318"/>
    <property type="project" value="GO_Central"/>
</dbReference>
<dbReference type="CDD" id="cd00827">
    <property type="entry name" value="init_cond_enzymes"/>
    <property type="match status" value="1"/>
</dbReference>
<dbReference type="FunFam" id="3.40.47.10:FF:000008">
    <property type="entry name" value="3-hydroxy-3-methylglutaryl coenzyme A synthase"/>
    <property type="match status" value="1"/>
</dbReference>
<dbReference type="Gene3D" id="3.40.47.10">
    <property type="match status" value="1"/>
</dbReference>
<dbReference type="InterPro" id="IPR000590">
    <property type="entry name" value="HMG_CoA_synt_AS"/>
</dbReference>
<dbReference type="InterPro" id="IPR013746">
    <property type="entry name" value="HMG_CoA_synt_C_dom"/>
</dbReference>
<dbReference type="InterPro" id="IPR013528">
    <property type="entry name" value="HMG_CoA_synth_N"/>
</dbReference>
<dbReference type="InterPro" id="IPR010122">
    <property type="entry name" value="HMG_CoA_synthase_euk"/>
</dbReference>
<dbReference type="InterPro" id="IPR016039">
    <property type="entry name" value="Thiolase-like"/>
</dbReference>
<dbReference type="NCBIfam" id="TIGR01833">
    <property type="entry name" value="HMG-CoA-S_euk"/>
    <property type="match status" value="1"/>
</dbReference>
<dbReference type="PANTHER" id="PTHR43323">
    <property type="entry name" value="3-HYDROXY-3-METHYLGLUTARYL COENZYME A SYNTHASE"/>
    <property type="match status" value="1"/>
</dbReference>
<dbReference type="PANTHER" id="PTHR43323:SF1">
    <property type="entry name" value="HYDROXYMETHYLGLUTARYL-COA SYNTHASE, MITOCHONDRIAL"/>
    <property type="match status" value="1"/>
</dbReference>
<dbReference type="Pfam" id="PF08540">
    <property type="entry name" value="HMG_CoA_synt_C"/>
    <property type="match status" value="1"/>
</dbReference>
<dbReference type="Pfam" id="PF01154">
    <property type="entry name" value="HMG_CoA_synt_N"/>
    <property type="match status" value="1"/>
</dbReference>
<dbReference type="SUPFAM" id="SSF53901">
    <property type="entry name" value="Thiolase-like"/>
    <property type="match status" value="2"/>
</dbReference>
<dbReference type="PROSITE" id="PS01226">
    <property type="entry name" value="HMG_COA_SYNTHASE"/>
    <property type="match status" value="1"/>
</dbReference>
<gene>
    <name type="primary">HMGCS2</name>
</gene>
<evidence type="ECO:0000250" key="1">
    <source>
        <dbReference type="UniProtKB" id="P22791"/>
    </source>
</evidence>
<evidence type="ECO:0000250" key="2">
    <source>
        <dbReference type="UniProtKB" id="P54868"/>
    </source>
</evidence>
<evidence type="ECO:0000250" key="3">
    <source>
        <dbReference type="UniProtKB" id="P54869"/>
    </source>
</evidence>
<evidence type="ECO:0000250" key="4">
    <source>
        <dbReference type="UniProtKB" id="Q2KIE6"/>
    </source>
</evidence>
<evidence type="ECO:0000255" key="5">
    <source>
        <dbReference type="PROSITE-ProRule" id="PRU10116"/>
    </source>
</evidence>
<evidence type="ECO:0000305" key="6"/>
<name>HMCS2_PIG</name>
<accession>O02734</accession>
<accession>A5GFY7</accession>
<keyword id="KW-0007">Acetylation</keyword>
<keyword id="KW-0152">Cholesterol biosynthesis</keyword>
<keyword id="KW-0153">Cholesterol metabolism</keyword>
<keyword id="KW-0444">Lipid biosynthesis</keyword>
<keyword id="KW-0443">Lipid metabolism</keyword>
<keyword id="KW-0496">Mitochondrion</keyword>
<keyword id="KW-0597">Phosphoprotein</keyword>
<keyword id="KW-1185">Reference proteome</keyword>
<keyword id="KW-0752">Steroid biosynthesis</keyword>
<keyword id="KW-0753">Steroid metabolism</keyword>
<keyword id="KW-0756">Sterol biosynthesis</keyword>
<keyword id="KW-1207">Sterol metabolism</keyword>
<keyword id="KW-0808">Transferase</keyword>
<keyword id="KW-0809">Transit peptide</keyword>
<sequence length="508" mass="56934">MQRLLTPVRQVLRVKRAMQEASFMPPLLPPAAHQRFSTVPAVPVAKADTWPKDVGILALEVYFPAQYVDQTDLEKFDNVEAGRYTVGLGQTHMGFCSVQEDINSLCLTVVQRLMERTQLPWDSVGWLEVGTETIIDKSKSVKTVLMELFQDSGNTDIEGIDTTNACYGGTASLFNAANWVESSAWDGRYAVVVCGDIAVYPRGNSRPTGGAGAVAMLVGPEAPLALERGLRGTHMENAYDFYKPNATSEYPLVDGKLSIQCYLRALDRCYTLYRQKIEKQWKQAGIERHFTLDDLQFMIFHTPFCKLVQKSLARLMFSDFLLADSDTQSSLYKGLEAFRGQKLEDTYANKDIEKAFQKASLDLFNKKTKPSLYLSLHNGNMYTSSLYGCLASLLSQCSAQDLAGSRIGAFSYGSGLAASFYSLRVSQDASPGSPLEKLVSSVSDLPERLASRKRVSPEEFTEIMNQREQYYHKVNFTPPGDPNSLFPGTWYLERVDELYRRKYARHLV</sequence>
<protein>
    <recommendedName>
        <fullName>Hydroxymethylglutaryl-CoA synthase, mitochondrial</fullName>
        <shortName>HMG-CoA synthase</shortName>
        <ecNumber evidence="2">2.3.3.10</ecNumber>
    </recommendedName>
    <alternativeName>
        <fullName>3-hydroxy-3-methylglutaryl coenzyme A synthase</fullName>
    </alternativeName>
</protein>
<comment type="function">
    <text evidence="2">Catalyzes the first irreversible step in ketogenesis, condensing acetyl-CoA to acetoacetyl-CoA to form HMG-CoA, which is converted by HMG-CoA reductase (HMGCR) into mevalonate.</text>
</comment>
<comment type="catalytic activity">
    <reaction evidence="2">
        <text>acetoacetyl-CoA + acetyl-CoA + H2O = (3S)-3-hydroxy-3-methylglutaryl-CoA + CoA + H(+)</text>
        <dbReference type="Rhea" id="RHEA:10188"/>
        <dbReference type="ChEBI" id="CHEBI:15377"/>
        <dbReference type="ChEBI" id="CHEBI:15378"/>
        <dbReference type="ChEBI" id="CHEBI:43074"/>
        <dbReference type="ChEBI" id="CHEBI:57286"/>
        <dbReference type="ChEBI" id="CHEBI:57287"/>
        <dbReference type="ChEBI" id="CHEBI:57288"/>
        <dbReference type="EC" id="2.3.3.10"/>
    </reaction>
    <physiologicalReaction direction="left-to-right" evidence="2">
        <dbReference type="Rhea" id="RHEA:10189"/>
    </physiologicalReaction>
</comment>
<comment type="pathway">
    <text>Metabolic intermediate biosynthesis; (R)-mevalonate biosynthesis; (R)-mevalonate from acetyl-CoA: step 2/3.</text>
</comment>
<comment type="subunit">
    <text evidence="2">Homodimer.</text>
</comment>
<comment type="subcellular location">
    <subcellularLocation>
        <location evidence="1">Mitochondrion</location>
    </subcellularLocation>
</comment>
<comment type="PTM">
    <text evidence="3">Succinylated. Desuccinylated by SIRT5. Succinylation, at least at Lys-310, inhibits the enzymatic activity.</text>
</comment>
<comment type="similarity">
    <text evidence="6">Belongs to the thiolase-like superfamily. HMG-CoA synthase family.</text>
</comment>